<keyword id="KW-0004">4Fe-4S</keyword>
<keyword id="KW-0963">Cytoplasm</keyword>
<keyword id="KW-1015">Disulfide bond</keyword>
<keyword id="KW-0408">Iron</keyword>
<keyword id="KW-0411">Iron-sulfur</keyword>
<keyword id="KW-0479">Metal-binding</keyword>
<keyword id="KW-0489">Methyltransferase</keyword>
<keyword id="KW-1185">Reference proteome</keyword>
<keyword id="KW-0698">rRNA processing</keyword>
<keyword id="KW-0949">S-adenosyl-L-methionine</keyword>
<keyword id="KW-0808">Transferase</keyword>
<keyword id="KW-0819">tRNA processing</keyword>
<organism>
    <name type="scientific">Actinobacillus pleuropneumoniae serotype 5b (strain L20)</name>
    <dbReference type="NCBI Taxonomy" id="416269"/>
    <lineage>
        <taxon>Bacteria</taxon>
        <taxon>Pseudomonadati</taxon>
        <taxon>Pseudomonadota</taxon>
        <taxon>Gammaproteobacteria</taxon>
        <taxon>Pasteurellales</taxon>
        <taxon>Pasteurellaceae</taxon>
        <taxon>Actinobacillus</taxon>
    </lineage>
</organism>
<protein>
    <recommendedName>
        <fullName evidence="1">Dual-specificity RNA methyltransferase RlmN</fullName>
        <ecNumber evidence="1">2.1.1.192</ecNumber>
    </recommendedName>
    <alternativeName>
        <fullName evidence="1">23S rRNA (adenine(2503)-C(2))-methyltransferase</fullName>
    </alternativeName>
    <alternativeName>
        <fullName evidence="1">23S rRNA m2A2503 methyltransferase</fullName>
    </alternativeName>
    <alternativeName>
        <fullName evidence="1">Ribosomal RNA large subunit methyltransferase N</fullName>
    </alternativeName>
    <alternativeName>
        <fullName evidence="1">tRNA (adenine(37)-C(2))-methyltransferase</fullName>
    </alternativeName>
    <alternativeName>
        <fullName evidence="1">tRNA m2A37 methyltransferase</fullName>
    </alternativeName>
</protein>
<comment type="function">
    <text evidence="1">Specifically methylates position 2 of adenine 2503 in 23S rRNA and position 2 of adenine 37 in tRNAs. m2A2503 modification seems to play a crucial role in the proofreading step occurring at the peptidyl transferase center and thus would serve to optimize ribosomal fidelity.</text>
</comment>
<comment type="catalytic activity">
    <reaction evidence="1">
        <text>adenosine(2503) in 23S rRNA + 2 reduced [2Fe-2S]-[ferredoxin] + 2 S-adenosyl-L-methionine = 2-methyladenosine(2503) in 23S rRNA + 5'-deoxyadenosine + L-methionine + 2 oxidized [2Fe-2S]-[ferredoxin] + S-adenosyl-L-homocysteine</text>
        <dbReference type="Rhea" id="RHEA:42916"/>
        <dbReference type="Rhea" id="RHEA-COMP:10000"/>
        <dbReference type="Rhea" id="RHEA-COMP:10001"/>
        <dbReference type="Rhea" id="RHEA-COMP:10152"/>
        <dbReference type="Rhea" id="RHEA-COMP:10282"/>
        <dbReference type="ChEBI" id="CHEBI:17319"/>
        <dbReference type="ChEBI" id="CHEBI:33737"/>
        <dbReference type="ChEBI" id="CHEBI:33738"/>
        <dbReference type="ChEBI" id="CHEBI:57844"/>
        <dbReference type="ChEBI" id="CHEBI:57856"/>
        <dbReference type="ChEBI" id="CHEBI:59789"/>
        <dbReference type="ChEBI" id="CHEBI:74411"/>
        <dbReference type="ChEBI" id="CHEBI:74497"/>
        <dbReference type="EC" id="2.1.1.192"/>
    </reaction>
</comment>
<comment type="catalytic activity">
    <reaction evidence="1">
        <text>adenosine(37) in tRNA + 2 reduced [2Fe-2S]-[ferredoxin] + 2 S-adenosyl-L-methionine = 2-methyladenosine(37) in tRNA + 5'-deoxyadenosine + L-methionine + 2 oxidized [2Fe-2S]-[ferredoxin] + S-adenosyl-L-homocysteine</text>
        <dbReference type="Rhea" id="RHEA:43332"/>
        <dbReference type="Rhea" id="RHEA-COMP:10000"/>
        <dbReference type="Rhea" id="RHEA-COMP:10001"/>
        <dbReference type="Rhea" id="RHEA-COMP:10162"/>
        <dbReference type="Rhea" id="RHEA-COMP:10485"/>
        <dbReference type="ChEBI" id="CHEBI:17319"/>
        <dbReference type="ChEBI" id="CHEBI:33737"/>
        <dbReference type="ChEBI" id="CHEBI:33738"/>
        <dbReference type="ChEBI" id="CHEBI:57844"/>
        <dbReference type="ChEBI" id="CHEBI:57856"/>
        <dbReference type="ChEBI" id="CHEBI:59789"/>
        <dbReference type="ChEBI" id="CHEBI:74411"/>
        <dbReference type="ChEBI" id="CHEBI:74497"/>
        <dbReference type="EC" id="2.1.1.192"/>
    </reaction>
</comment>
<comment type="cofactor">
    <cofactor evidence="1">
        <name>[4Fe-4S] cluster</name>
        <dbReference type="ChEBI" id="CHEBI:49883"/>
    </cofactor>
    <text evidence="1">Binds 1 [4Fe-4S] cluster. The cluster is coordinated with 3 cysteines and an exchangeable S-adenosyl-L-methionine.</text>
</comment>
<comment type="subcellular location">
    <subcellularLocation>
        <location evidence="1">Cytoplasm</location>
    </subcellularLocation>
</comment>
<comment type="miscellaneous">
    <text evidence="1">Reaction proceeds by a ping-pong mechanism involving intermediate methylation of a conserved cysteine residue.</text>
</comment>
<comment type="similarity">
    <text evidence="1">Belongs to the radical SAM superfamily. RlmN family.</text>
</comment>
<dbReference type="EC" id="2.1.1.192" evidence="1"/>
<dbReference type="EMBL" id="CP000569">
    <property type="protein sequence ID" value="ABN74360.1"/>
    <property type="molecule type" value="Genomic_DNA"/>
</dbReference>
<dbReference type="RefSeq" id="WP_009875290.1">
    <property type="nucleotide sequence ID" value="NC_009053.1"/>
</dbReference>
<dbReference type="SMR" id="A3N1S4"/>
<dbReference type="STRING" id="416269.APL_1274"/>
<dbReference type="EnsemblBacteria" id="ABN74360">
    <property type="protein sequence ID" value="ABN74360"/>
    <property type="gene ID" value="APL_1274"/>
</dbReference>
<dbReference type="KEGG" id="apl:APL_1274"/>
<dbReference type="PATRIC" id="fig|416269.6.peg.1330"/>
<dbReference type="eggNOG" id="COG0820">
    <property type="taxonomic scope" value="Bacteria"/>
</dbReference>
<dbReference type="HOGENOM" id="CLU_029101_0_0_6"/>
<dbReference type="Proteomes" id="UP000001432">
    <property type="component" value="Chromosome"/>
</dbReference>
<dbReference type="GO" id="GO:0005737">
    <property type="term" value="C:cytoplasm"/>
    <property type="evidence" value="ECO:0007669"/>
    <property type="project" value="UniProtKB-SubCell"/>
</dbReference>
<dbReference type="GO" id="GO:0051539">
    <property type="term" value="F:4 iron, 4 sulfur cluster binding"/>
    <property type="evidence" value="ECO:0007669"/>
    <property type="project" value="UniProtKB-UniRule"/>
</dbReference>
<dbReference type="GO" id="GO:0046872">
    <property type="term" value="F:metal ion binding"/>
    <property type="evidence" value="ECO:0007669"/>
    <property type="project" value="UniProtKB-KW"/>
</dbReference>
<dbReference type="GO" id="GO:0070040">
    <property type="term" value="F:rRNA (adenine(2503)-C2-)-methyltransferase activity"/>
    <property type="evidence" value="ECO:0007669"/>
    <property type="project" value="UniProtKB-UniRule"/>
</dbReference>
<dbReference type="GO" id="GO:0019843">
    <property type="term" value="F:rRNA binding"/>
    <property type="evidence" value="ECO:0007669"/>
    <property type="project" value="UniProtKB-UniRule"/>
</dbReference>
<dbReference type="GO" id="GO:0002935">
    <property type="term" value="F:tRNA (adenine(37)-C2)-methyltransferase activity"/>
    <property type="evidence" value="ECO:0007669"/>
    <property type="project" value="UniProtKB-UniRule"/>
</dbReference>
<dbReference type="GO" id="GO:0000049">
    <property type="term" value="F:tRNA binding"/>
    <property type="evidence" value="ECO:0007669"/>
    <property type="project" value="UniProtKB-UniRule"/>
</dbReference>
<dbReference type="GO" id="GO:0070475">
    <property type="term" value="P:rRNA base methylation"/>
    <property type="evidence" value="ECO:0007669"/>
    <property type="project" value="UniProtKB-UniRule"/>
</dbReference>
<dbReference type="GO" id="GO:0030488">
    <property type="term" value="P:tRNA methylation"/>
    <property type="evidence" value="ECO:0007669"/>
    <property type="project" value="UniProtKB-UniRule"/>
</dbReference>
<dbReference type="CDD" id="cd01335">
    <property type="entry name" value="Radical_SAM"/>
    <property type="match status" value="1"/>
</dbReference>
<dbReference type="FunFam" id="1.10.150.530:FF:000003">
    <property type="entry name" value="Dual-specificity RNA methyltransferase RlmN"/>
    <property type="match status" value="1"/>
</dbReference>
<dbReference type="FunFam" id="3.20.20.70:FF:000008">
    <property type="entry name" value="Dual-specificity RNA methyltransferase RlmN"/>
    <property type="match status" value="1"/>
</dbReference>
<dbReference type="Gene3D" id="1.10.150.530">
    <property type="match status" value="1"/>
</dbReference>
<dbReference type="Gene3D" id="3.20.20.70">
    <property type="entry name" value="Aldolase class I"/>
    <property type="match status" value="1"/>
</dbReference>
<dbReference type="HAMAP" id="MF_01849">
    <property type="entry name" value="RNA_methyltr_RlmN"/>
    <property type="match status" value="1"/>
</dbReference>
<dbReference type="InterPro" id="IPR013785">
    <property type="entry name" value="Aldolase_TIM"/>
</dbReference>
<dbReference type="InterPro" id="IPR040072">
    <property type="entry name" value="Methyltransferase_A"/>
</dbReference>
<dbReference type="InterPro" id="IPR048641">
    <property type="entry name" value="RlmN_N"/>
</dbReference>
<dbReference type="InterPro" id="IPR027492">
    <property type="entry name" value="RNA_MTrfase_RlmN"/>
</dbReference>
<dbReference type="InterPro" id="IPR004383">
    <property type="entry name" value="rRNA_lsu_MTrfase_RlmN/Cfr"/>
</dbReference>
<dbReference type="InterPro" id="IPR007197">
    <property type="entry name" value="rSAM"/>
</dbReference>
<dbReference type="NCBIfam" id="NF008396">
    <property type="entry name" value="PRK11194.1"/>
    <property type="match status" value="1"/>
</dbReference>
<dbReference type="NCBIfam" id="TIGR00048">
    <property type="entry name" value="rRNA_mod_RlmN"/>
    <property type="match status" value="1"/>
</dbReference>
<dbReference type="PANTHER" id="PTHR30544">
    <property type="entry name" value="23S RRNA METHYLTRANSFERASE"/>
    <property type="match status" value="1"/>
</dbReference>
<dbReference type="PANTHER" id="PTHR30544:SF5">
    <property type="entry name" value="RADICAL SAM CORE DOMAIN-CONTAINING PROTEIN"/>
    <property type="match status" value="1"/>
</dbReference>
<dbReference type="Pfam" id="PF04055">
    <property type="entry name" value="Radical_SAM"/>
    <property type="match status" value="1"/>
</dbReference>
<dbReference type="Pfam" id="PF21016">
    <property type="entry name" value="RlmN_N"/>
    <property type="match status" value="1"/>
</dbReference>
<dbReference type="PIRSF" id="PIRSF006004">
    <property type="entry name" value="CHP00048"/>
    <property type="match status" value="1"/>
</dbReference>
<dbReference type="SFLD" id="SFLDF00275">
    <property type="entry name" value="adenosine_C2_methyltransferase"/>
    <property type="match status" value="1"/>
</dbReference>
<dbReference type="SFLD" id="SFLDG01062">
    <property type="entry name" value="methyltransferase_(Class_A)"/>
    <property type="match status" value="1"/>
</dbReference>
<dbReference type="SUPFAM" id="SSF102114">
    <property type="entry name" value="Radical SAM enzymes"/>
    <property type="match status" value="1"/>
</dbReference>
<dbReference type="PROSITE" id="PS51918">
    <property type="entry name" value="RADICAL_SAM"/>
    <property type="match status" value="1"/>
</dbReference>
<name>RLMN_ACTP2</name>
<evidence type="ECO:0000255" key="1">
    <source>
        <dbReference type="HAMAP-Rule" id="MF_01849"/>
    </source>
</evidence>
<evidence type="ECO:0000255" key="2">
    <source>
        <dbReference type="PROSITE-ProRule" id="PRU01266"/>
    </source>
</evidence>
<proteinExistence type="inferred from homology"/>
<gene>
    <name evidence="1" type="primary">rlmN</name>
    <name type="ordered locus">APL_1274</name>
</gene>
<sequence length="393" mass="44203">MSEQTQTCASEIQATNVAVQHPKSEKINLMNLTRKEMRELFAEMGEKPFRADQLMKWIYHFGEDNFDNMSNINKVLREKLKQIAEIKAPEVSVEQRSSDGTIKWAMQVGDQQIETVYIPEDDRATLCVSSQVGCALACKFCSTAQQGFNRNLTVSEIIGQVWRASKIIGNFGITGVRPITNVVMMGMGEPLLNLNNVIPAMEIMLDDFAYGLSKRRVTLSTAGVVPALDIMREKIDVALAISLHAPNDELRDEIMPINKKYNIKMLMDSVHKYLEVSNANHGKVTIEYVLLDHVNDGTEHAHQLAEVLKNTPCKINLIPWNPFPEAPYGKSSNSRVDRFQKTLMEYGFTVIVRKTRGDDIDAACGQLAGDVIDRTKRTMEKRKFGKGIAVQNH</sequence>
<feature type="chain" id="PRO_0000350002" description="Dual-specificity RNA methyltransferase RlmN">
    <location>
        <begin position="1"/>
        <end position="393"/>
    </location>
</feature>
<feature type="domain" description="Radical SAM core" evidence="2">
    <location>
        <begin position="120"/>
        <end position="359"/>
    </location>
</feature>
<feature type="active site" description="Proton acceptor" evidence="1">
    <location>
        <position position="114"/>
    </location>
</feature>
<feature type="active site" description="S-methylcysteine intermediate" evidence="1">
    <location>
        <position position="364"/>
    </location>
</feature>
<feature type="binding site" evidence="1">
    <location>
        <position position="134"/>
    </location>
    <ligand>
        <name>[4Fe-4S] cluster</name>
        <dbReference type="ChEBI" id="CHEBI:49883"/>
        <note>4Fe-4S-S-AdoMet</note>
    </ligand>
</feature>
<feature type="binding site" evidence="1">
    <location>
        <position position="138"/>
    </location>
    <ligand>
        <name>[4Fe-4S] cluster</name>
        <dbReference type="ChEBI" id="CHEBI:49883"/>
        <note>4Fe-4S-S-AdoMet</note>
    </ligand>
</feature>
<feature type="binding site" evidence="1">
    <location>
        <position position="141"/>
    </location>
    <ligand>
        <name>[4Fe-4S] cluster</name>
        <dbReference type="ChEBI" id="CHEBI:49883"/>
        <note>4Fe-4S-S-AdoMet</note>
    </ligand>
</feature>
<feature type="binding site" evidence="1">
    <location>
        <begin position="188"/>
        <end position="189"/>
    </location>
    <ligand>
        <name>S-adenosyl-L-methionine</name>
        <dbReference type="ChEBI" id="CHEBI:59789"/>
    </ligand>
</feature>
<feature type="binding site" evidence="1">
    <location>
        <position position="220"/>
    </location>
    <ligand>
        <name>S-adenosyl-L-methionine</name>
        <dbReference type="ChEBI" id="CHEBI:59789"/>
    </ligand>
</feature>
<feature type="binding site" evidence="1">
    <location>
        <begin position="242"/>
        <end position="244"/>
    </location>
    <ligand>
        <name>S-adenosyl-L-methionine</name>
        <dbReference type="ChEBI" id="CHEBI:59789"/>
    </ligand>
</feature>
<feature type="binding site" evidence="1">
    <location>
        <position position="321"/>
    </location>
    <ligand>
        <name>S-adenosyl-L-methionine</name>
        <dbReference type="ChEBI" id="CHEBI:59789"/>
    </ligand>
</feature>
<feature type="disulfide bond" description="(transient)" evidence="1">
    <location>
        <begin position="127"/>
        <end position="364"/>
    </location>
</feature>
<reference key="1">
    <citation type="journal article" date="2008" name="J. Bacteriol.">
        <title>The complete genome sequence of Actinobacillus pleuropneumoniae L20 (serotype 5b).</title>
        <authorList>
            <person name="Foote S.J."/>
            <person name="Bosse J.T."/>
            <person name="Bouevitch A.B."/>
            <person name="Langford P.R."/>
            <person name="Young N.M."/>
            <person name="Nash J.H.E."/>
        </authorList>
    </citation>
    <scope>NUCLEOTIDE SEQUENCE [LARGE SCALE GENOMIC DNA]</scope>
    <source>
        <strain>L20</strain>
    </source>
</reference>
<accession>A3N1S4</accession>